<accession>Q0KET8</accession>
<evidence type="ECO:0000255" key="1">
    <source>
        <dbReference type="HAMAP-Rule" id="MF_01039"/>
    </source>
</evidence>
<evidence type="ECO:0000256" key="2">
    <source>
        <dbReference type="SAM" id="MobiDB-lite"/>
    </source>
</evidence>
<keyword id="KW-0312">Gluconeogenesis</keyword>
<keyword id="KW-0324">Glycolysis</keyword>
<keyword id="KW-0413">Isomerase</keyword>
<keyword id="KW-1185">Reference proteome</keyword>
<gene>
    <name evidence="1" type="primary">gpmA</name>
    <name type="ordered locus">H16_A0332</name>
</gene>
<reference key="1">
    <citation type="journal article" date="2006" name="Nat. Biotechnol.">
        <title>Genome sequence of the bioplastic-producing 'Knallgas' bacterium Ralstonia eutropha H16.</title>
        <authorList>
            <person name="Pohlmann A."/>
            <person name="Fricke W.F."/>
            <person name="Reinecke F."/>
            <person name="Kusian B."/>
            <person name="Liesegang H."/>
            <person name="Cramm R."/>
            <person name="Eitinger T."/>
            <person name="Ewering C."/>
            <person name="Poetter M."/>
            <person name="Schwartz E."/>
            <person name="Strittmatter A."/>
            <person name="Voss I."/>
            <person name="Gottschalk G."/>
            <person name="Steinbuechel A."/>
            <person name="Friedrich B."/>
            <person name="Bowien B."/>
        </authorList>
    </citation>
    <scope>NUCLEOTIDE SEQUENCE [LARGE SCALE GENOMIC DNA]</scope>
    <source>
        <strain>ATCC 17699 / DSM 428 / KCTC 22496 / NCIMB 10442 / H16 / Stanier 337</strain>
    </source>
</reference>
<comment type="function">
    <text evidence="1">Catalyzes the interconversion of 2-phosphoglycerate and 3-phosphoglycerate.</text>
</comment>
<comment type="catalytic activity">
    <reaction evidence="1">
        <text>(2R)-2-phosphoglycerate = (2R)-3-phosphoglycerate</text>
        <dbReference type="Rhea" id="RHEA:15901"/>
        <dbReference type="ChEBI" id="CHEBI:58272"/>
        <dbReference type="ChEBI" id="CHEBI:58289"/>
        <dbReference type="EC" id="5.4.2.11"/>
    </reaction>
</comment>
<comment type="pathway">
    <text evidence="1">Carbohydrate degradation; glycolysis; pyruvate from D-glyceraldehyde 3-phosphate: step 3/5.</text>
</comment>
<comment type="subunit">
    <text evidence="1">Homodimer.</text>
</comment>
<comment type="similarity">
    <text evidence="1">Belongs to the phosphoglycerate mutase family. BPG-dependent PGAM subfamily.</text>
</comment>
<organism>
    <name type="scientific">Cupriavidus necator (strain ATCC 17699 / DSM 428 / KCTC 22496 / NCIMB 10442 / H16 / Stanier 337)</name>
    <name type="common">Ralstonia eutropha</name>
    <dbReference type="NCBI Taxonomy" id="381666"/>
    <lineage>
        <taxon>Bacteria</taxon>
        <taxon>Pseudomonadati</taxon>
        <taxon>Pseudomonadota</taxon>
        <taxon>Betaproteobacteria</taxon>
        <taxon>Burkholderiales</taxon>
        <taxon>Burkholderiaceae</taxon>
        <taxon>Cupriavidus</taxon>
    </lineage>
</organism>
<name>GPMA_CUPNH</name>
<sequence length="248" mass="27865">MYKLVLIRHGESTWNLENRFTGWVDVDLTETGADQARQAGKLLKDAGLGFDVAYTSVLKRAIRTLWHVQDEMDLMWIPVRNEWRLNERHYGALAGLNKAETAAKFGDEQVLVWRRSYDTPPPALEPTDPRASYDDPRYANVPRNEIPLTECLKDTVARVMPLWNESIAPDIQSGKRVVIAAHGNSIRALVKYLDQISDDDIVGLNIPNGTPLVYELDADLRPLRHYYLGDQDAIAASLAAVASQGKAR</sequence>
<protein>
    <recommendedName>
        <fullName evidence="1">2,3-bisphosphoglycerate-dependent phosphoglycerate mutase</fullName>
        <shortName evidence="1">BPG-dependent PGAM</shortName>
        <shortName evidence="1">PGAM</shortName>
        <shortName evidence="1">Phosphoglyceromutase</shortName>
        <shortName evidence="1">dPGM</shortName>
        <ecNumber evidence="1">5.4.2.11</ecNumber>
    </recommendedName>
</protein>
<proteinExistence type="inferred from homology"/>
<dbReference type="EC" id="5.4.2.11" evidence="1"/>
<dbReference type="EMBL" id="AM260479">
    <property type="protein sequence ID" value="CAJ91483.1"/>
    <property type="molecule type" value="Genomic_DNA"/>
</dbReference>
<dbReference type="RefSeq" id="WP_010814831.1">
    <property type="nucleotide sequence ID" value="NZ_CP039287.1"/>
</dbReference>
<dbReference type="SMR" id="Q0KET8"/>
<dbReference type="STRING" id="381666.H16_A0332"/>
<dbReference type="GeneID" id="34310334"/>
<dbReference type="KEGG" id="reh:H16_A0332"/>
<dbReference type="eggNOG" id="COG0588">
    <property type="taxonomic scope" value="Bacteria"/>
</dbReference>
<dbReference type="HOGENOM" id="CLU_033323_1_1_4"/>
<dbReference type="OrthoDB" id="9781415at2"/>
<dbReference type="UniPathway" id="UPA00109">
    <property type="reaction ID" value="UER00186"/>
</dbReference>
<dbReference type="Proteomes" id="UP000008210">
    <property type="component" value="Chromosome 1"/>
</dbReference>
<dbReference type="GO" id="GO:0004619">
    <property type="term" value="F:phosphoglycerate mutase activity"/>
    <property type="evidence" value="ECO:0007669"/>
    <property type="project" value="UniProtKB-EC"/>
</dbReference>
<dbReference type="GO" id="GO:0006094">
    <property type="term" value="P:gluconeogenesis"/>
    <property type="evidence" value="ECO:0007669"/>
    <property type="project" value="UniProtKB-UniRule"/>
</dbReference>
<dbReference type="GO" id="GO:0006096">
    <property type="term" value="P:glycolytic process"/>
    <property type="evidence" value="ECO:0007669"/>
    <property type="project" value="UniProtKB-UniRule"/>
</dbReference>
<dbReference type="CDD" id="cd07067">
    <property type="entry name" value="HP_PGM_like"/>
    <property type="match status" value="1"/>
</dbReference>
<dbReference type="FunFam" id="3.40.50.1240:FF:000003">
    <property type="entry name" value="2,3-bisphosphoglycerate-dependent phosphoglycerate mutase"/>
    <property type="match status" value="1"/>
</dbReference>
<dbReference type="Gene3D" id="3.40.50.1240">
    <property type="entry name" value="Phosphoglycerate mutase-like"/>
    <property type="match status" value="1"/>
</dbReference>
<dbReference type="HAMAP" id="MF_01039">
    <property type="entry name" value="PGAM_GpmA"/>
    <property type="match status" value="1"/>
</dbReference>
<dbReference type="InterPro" id="IPR013078">
    <property type="entry name" value="His_Pase_superF_clade-1"/>
</dbReference>
<dbReference type="InterPro" id="IPR029033">
    <property type="entry name" value="His_PPase_superfam"/>
</dbReference>
<dbReference type="InterPro" id="IPR001345">
    <property type="entry name" value="PG/BPGM_mutase_AS"/>
</dbReference>
<dbReference type="InterPro" id="IPR005952">
    <property type="entry name" value="Phosphogly_mut1"/>
</dbReference>
<dbReference type="NCBIfam" id="TIGR01258">
    <property type="entry name" value="pgm_1"/>
    <property type="match status" value="1"/>
</dbReference>
<dbReference type="NCBIfam" id="NF010713">
    <property type="entry name" value="PRK14115.1"/>
    <property type="match status" value="1"/>
</dbReference>
<dbReference type="PANTHER" id="PTHR11931">
    <property type="entry name" value="PHOSPHOGLYCERATE MUTASE"/>
    <property type="match status" value="1"/>
</dbReference>
<dbReference type="Pfam" id="PF00300">
    <property type="entry name" value="His_Phos_1"/>
    <property type="match status" value="2"/>
</dbReference>
<dbReference type="PIRSF" id="PIRSF000709">
    <property type="entry name" value="6PFK_2-Ptase"/>
    <property type="match status" value="1"/>
</dbReference>
<dbReference type="SMART" id="SM00855">
    <property type="entry name" value="PGAM"/>
    <property type="match status" value="1"/>
</dbReference>
<dbReference type="SUPFAM" id="SSF53254">
    <property type="entry name" value="Phosphoglycerate mutase-like"/>
    <property type="match status" value="1"/>
</dbReference>
<dbReference type="PROSITE" id="PS00175">
    <property type="entry name" value="PG_MUTASE"/>
    <property type="match status" value="1"/>
</dbReference>
<feature type="chain" id="PRO_1000064089" description="2,3-bisphosphoglycerate-dependent phosphoglycerate mutase">
    <location>
        <begin position="1"/>
        <end position="248"/>
    </location>
</feature>
<feature type="region of interest" description="Disordered" evidence="2">
    <location>
        <begin position="118"/>
        <end position="137"/>
    </location>
</feature>
<feature type="compositionally biased region" description="Basic and acidic residues" evidence="2">
    <location>
        <begin position="127"/>
        <end position="137"/>
    </location>
</feature>
<feature type="active site" description="Tele-phosphohistidine intermediate" evidence="1">
    <location>
        <position position="9"/>
    </location>
</feature>
<feature type="active site" description="Proton donor/acceptor" evidence="1">
    <location>
        <position position="87"/>
    </location>
</feature>
<feature type="binding site" evidence="1">
    <location>
        <begin position="8"/>
        <end position="15"/>
    </location>
    <ligand>
        <name>substrate</name>
    </ligand>
</feature>
<feature type="binding site" evidence="1">
    <location>
        <begin position="21"/>
        <end position="22"/>
    </location>
    <ligand>
        <name>substrate</name>
    </ligand>
</feature>
<feature type="binding site" evidence="1">
    <location>
        <position position="60"/>
    </location>
    <ligand>
        <name>substrate</name>
    </ligand>
</feature>
<feature type="binding site" evidence="1">
    <location>
        <begin position="87"/>
        <end position="90"/>
    </location>
    <ligand>
        <name>substrate</name>
    </ligand>
</feature>
<feature type="binding site" evidence="1">
    <location>
        <position position="98"/>
    </location>
    <ligand>
        <name>substrate</name>
    </ligand>
</feature>
<feature type="binding site" evidence="1">
    <location>
        <begin position="114"/>
        <end position="115"/>
    </location>
    <ligand>
        <name>substrate</name>
    </ligand>
</feature>
<feature type="binding site" evidence="1">
    <location>
        <begin position="183"/>
        <end position="184"/>
    </location>
    <ligand>
        <name>substrate</name>
    </ligand>
</feature>
<feature type="site" description="Transition state stabilizer" evidence="1">
    <location>
        <position position="182"/>
    </location>
</feature>